<evidence type="ECO:0000269" key="1">
    <source>
    </source>
</evidence>
<evidence type="ECO:0000269" key="2">
    <source>
    </source>
</evidence>
<evidence type="ECO:0000305" key="3"/>
<evidence type="ECO:0007829" key="4">
    <source>
        <dbReference type="PDB" id="6Q56"/>
    </source>
</evidence>
<reference key="1">
    <citation type="journal article" date="1996" name="Microbiology">
        <title>Systematic sequencing of the 283 kb 210 degrees-232 degrees region of the Bacillus subtilis genome containing the skin element and many sporulation genes.</title>
        <authorList>
            <person name="Mizuno M."/>
            <person name="Masuda S."/>
            <person name="Takemaru K."/>
            <person name="Hosono S."/>
            <person name="Sato T."/>
            <person name="Takeuchi M."/>
            <person name="Kobayashi Y."/>
        </authorList>
    </citation>
    <scope>NUCLEOTIDE SEQUENCE [GENOMIC DNA]</scope>
    <source>
        <strain>168 / JH642</strain>
    </source>
</reference>
<reference key="2">
    <citation type="journal article" date="1997" name="Nature">
        <title>The complete genome sequence of the Gram-positive bacterium Bacillus subtilis.</title>
        <authorList>
            <person name="Kunst F."/>
            <person name="Ogasawara N."/>
            <person name="Moszer I."/>
            <person name="Albertini A.M."/>
            <person name="Alloni G."/>
            <person name="Azevedo V."/>
            <person name="Bertero M.G."/>
            <person name="Bessieres P."/>
            <person name="Bolotin A."/>
            <person name="Borchert S."/>
            <person name="Borriss R."/>
            <person name="Boursier L."/>
            <person name="Brans A."/>
            <person name="Braun M."/>
            <person name="Brignell S.C."/>
            <person name="Bron S."/>
            <person name="Brouillet S."/>
            <person name="Bruschi C.V."/>
            <person name="Caldwell B."/>
            <person name="Capuano V."/>
            <person name="Carter N.M."/>
            <person name="Choi S.-K."/>
            <person name="Codani J.-J."/>
            <person name="Connerton I.F."/>
            <person name="Cummings N.J."/>
            <person name="Daniel R.A."/>
            <person name="Denizot F."/>
            <person name="Devine K.M."/>
            <person name="Duesterhoeft A."/>
            <person name="Ehrlich S.D."/>
            <person name="Emmerson P.T."/>
            <person name="Entian K.-D."/>
            <person name="Errington J."/>
            <person name="Fabret C."/>
            <person name="Ferrari E."/>
            <person name="Foulger D."/>
            <person name="Fritz C."/>
            <person name="Fujita M."/>
            <person name="Fujita Y."/>
            <person name="Fuma S."/>
            <person name="Galizzi A."/>
            <person name="Galleron N."/>
            <person name="Ghim S.-Y."/>
            <person name="Glaser P."/>
            <person name="Goffeau A."/>
            <person name="Golightly E.J."/>
            <person name="Grandi G."/>
            <person name="Guiseppi G."/>
            <person name="Guy B.J."/>
            <person name="Haga K."/>
            <person name="Haiech J."/>
            <person name="Harwood C.R."/>
            <person name="Henaut A."/>
            <person name="Hilbert H."/>
            <person name="Holsappel S."/>
            <person name="Hosono S."/>
            <person name="Hullo M.-F."/>
            <person name="Itaya M."/>
            <person name="Jones L.-M."/>
            <person name="Joris B."/>
            <person name="Karamata D."/>
            <person name="Kasahara Y."/>
            <person name="Klaerr-Blanchard M."/>
            <person name="Klein C."/>
            <person name="Kobayashi Y."/>
            <person name="Koetter P."/>
            <person name="Koningstein G."/>
            <person name="Krogh S."/>
            <person name="Kumano M."/>
            <person name="Kurita K."/>
            <person name="Lapidus A."/>
            <person name="Lardinois S."/>
            <person name="Lauber J."/>
            <person name="Lazarevic V."/>
            <person name="Lee S.-M."/>
            <person name="Levine A."/>
            <person name="Liu H."/>
            <person name="Masuda S."/>
            <person name="Mauel C."/>
            <person name="Medigue C."/>
            <person name="Medina N."/>
            <person name="Mellado R.P."/>
            <person name="Mizuno M."/>
            <person name="Moestl D."/>
            <person name="Nakai S."/>
            <person name="Noback M."/>
            <person name="Noone D."/>
            <person name="O'Reilly M."/>
            <person name="Ogawa K."/>
            <person name="Ogiwara A."/>
            <person name="Oudega B."/>
            <person name="Park S.-H."/>
            <person name="Parro V."/>
            <person name="Pohl T.M."/>
            <person name="Portetelle D."/>
            <person name="Porwollik S."/>
            <person name="Prescott A.M."/>
            <person name="Presecan E."/>
            <person name="Pujic P."/>
            <person name="Purnelle B."/>
            <person name="Rapoport G."/>
            <person name="Rey M."/>
            <person name="Reynolds S."/>
            <person name="Rieger M."/>
            <person name="Rivolta C."/>
            <person name="Rocha E."/>
            <person name="Roche B."/>
            <person name="Rose M."/>
            <person name="Sadaie Y."/>
            <person name="Sato T."/>
            <person name="Scanlan E."/>
            <person name="Schleich S."/>
            <person name="Schroeter R."/>
            <person name="Scoffone F."/>
            <person name="Sekiguchi J."/>
            <person name="Sekowska A."/>
            <person name="Seror S.J."/>
            <person name="Serror P."/>
            <person name="Shin B.-S."/>
            <person name="Soldo B."/>
            <person name="Sorokin A."/>
            <person name="Tacconi E."/>
            <person name="Takagi T."/>
            <person name="Takahashi H."/>
            <person name="Takemaru K."/>
            <person name="Takeuchi M."/>
            <person name="Tamakoshi A."/>
            <person name="Tanaka T."/>
            <person name="Terpstra P."/>
            <person name="Tognoni A."/>
            <person name="Tosato V."/>
            <person name="Uchiyama S."/>
            <person name="Vandenbol M."/>
            <person name="Vannier F."/>
            <person name="Vassarotti A."/>
            <person name="Viari A."/>
            <person name="Wambutt R."/>
            <person name="Wedler E."/>
            <person name="Wedler H."/>
            <person name="Weitzenegger T."/>
            <person name="Winters P."/>
            <person name="Wipat A."/>
            <person name="Yamamoto H."/>
            <person name="Yamane K."/>
            <person name="Yasumoto K."/>
            <person name="Yata K."/>
            <person name="Yoshida K."/>
            <person name="Yoshikawa H.-F."/>
            <person name="Zumstein E."/>
            <person name="Yoshikawa H."/>
            <person name="Danchin A."/>
        </authorList>
    </citation>
    <scope>NUCLEOTIDE SEQUENCE [LARGE SCALE GENOMIC DNA]</scope>
    <source>
        <strain>168</strain>
    </source>
</reference>
<reference key="3">
    <citation type="journal article" date="2007" name="Mol. Cell. Proteomics">
        <title>The serine/threonine/tyrosine phosphoproteome of the model bacterium Bacillus subtilis.</title>
        <authorList>
            <person name="Macek B."/>
            <person name="Mijakovic I."/>
            <person name="Olsen J.V."/>
            <person name="Gnad F."/>
            <person name="Kumar C."/>
            <person name="Jensen P.R."/>
            <person name="Mann M."/>
        </authorList>
    </citation>
    <scope>PHOSPHORYLATION [LARGE SCALE ANALYSIS] AT SER-70</scope>
    <scope>IDENTIFICATION BY MASS SPECTROMETRY</scope>
    <source>
        <strain>168</strain>
    </source>
</reference>
<reference key="4">
    <citation type="journal article" date="2008" name="Nucleic Acids Res.">
        <title>The YqfN protein of Bacillus subtilis is the tRNA: m1A22 methyltransferase (TrmK).</title>
        <authorList>
            <person name="Roovers M."/>
            <person name="Kaminska K.H."/>
            <person name="Tkaczuk K.L."/>
            <person name="Gigot D."/>
            <person name="Droogmans L."/>
            <person name="Bujnicki J.M."/>
        </authorList>
    </citation>
    <scope>FUNCTION</scope>
    <scope>CATALYTIC ACTIVITY</scope>
    <scope>IDENTIFICATION OF START CODON</scope>
    <source>
        <strain>168</strain>
    </source>
</reference>
<name>TRMK_BACSU</name>
<proteinExistence type="evidence at protein level"/>
<gene>
    <name type="primary">trmK</name>
    <name type="synonym">yqfN</name>
    <name type="ordered locus">BSU25180</name>
</gene>
<protein>
    <recommendedName>
        <fullName>tRNA (adenine(22)-N(1))-methyltransferase</fullName>
        <ecNumber>2.1.1.217</ecNumber>
    </recommendedName>
    <alternativeName>
        <fullName>TrMet(m1A22)</fullName>
    </alternativeName>
    <alternativeName>
        <fullName>tRNA(m1A22)-methyltransferase</fullName>
        <shortName>tRNA(m1A22)MTase</shortName>
    </alternativeName>
</protein>
<feature type="chain" id="PRO_0000049798" description="tRNA (adenine(22)-N(1))-methyltransferase">
    <location>
        <begin position="1"/>
        <end position="238"/>
    </location>
</feature>
<feature type="modified residue" description="Phosphoserine" evidence="1">
    <location>
        <position position="70"/>
    </location>
</feature>
<feature type="helix" evidence="4">
    <location>
        <begin position="8"/>
        <end position="14"/>
    </location>
</feature>
<feature type="strand" evidence="4">
    <location>
        <begin position="21"/>
        <end position="26"/>
    </location>
</feature>
<feature type="helix" evidence="4">
    <location>
        <begin position="32"/>
        <end position="39"/>
    </location>
</feature>
<feature type="strand" evidence="4">
    <location>
        <begin position="42"/>
        <end position="52"/>
    </location>
</feature>
<feature type="helix" evidence="4">
    <location>
        <begin position="53"/>
        <end position="65"/>
    </location>
</feature>
<feature type="turn" evidence="4">
    <location>
        <begin position="69"/>
        <end position="71"/>
    </location>
</feature>
<feature type="strand" evidence="4">
    <location>
        <begin position="72"/>
        <end position="78"/>
    </location>
</feature>
<feature type="helix" evidence="4">
    <location>
        <begin position="79"/>
        <end position="82"/>
    </location>
</feature>
<feature type="strand" evidence="4">
    <location>
        <begin position="89"/>
        <end position="96"/>
    </location>
</feature>
<feature type="helix" evidence="4">
    <location>
        <begin position="98"/>
        <end position="107"/>
    </location>
</feature>
<feature type="helix" evidence="4">
    <location>
        <begin position="109"/>
        <end position="111"/>
    </location>
</feature>
<feature type="strand" evidence="4">
    <location>
        <begin position="116"/>
        <end position="124"/>
    </location>
</feature>
<feature type="helix" evidence="4">
    <location>
        <begin position="127"/>
        <end position="135"/>
    </location>
</feature>
<feature type="strand" evidence="4">
    <location>
        <begin position="139"/>
        <end position="148"/>
    </location>
</feature>
<feature type="strand" evidence="4">
    <location>
        <begin position="151"/>
        <end position="161"/>
    </location>
</feature>
<feature type="helix" evidence="4">
    <location>
        <begin position="165"/>
        <end position="167"/>
    </location>
</feature>
<feature type="helix" evidence="4">
    <location>
        <begin position="172"/>
        <end position="178"/>
    </location>
</feature>
<feature type="helix" evidence="4">
    <location>
        <begin position="180"/>
        <end position="185"/>
    </location>
</feature>
<feature type="helix" evidence="4">
    <location>
        <begin position="188"/>
        <end position="210"/>
    </location>
</feature>
<feature type="helix" evidence="4">
    <location>
        <begin position="215"/>
        <end position="234"/>
    </location>
</feature>
<organism>
    <name type="scientific">Bacillus subtilis (strain 168)</name>
    <dbReference type="NCBI Taxonomy" id="224308"/>
    <lineage>
        <taxon>Bacteria</taxon>
        <taxon>Bacillati</taxon>
        <taxon>Bacillota</taxon>
        <taxon>Bacilli</taxon>
        <taxon>Bacillales</taxon>
        <taxon>Bacillaceae</taxon>
        <taxon>Bacillus</taxon>
    </lineage>
</organism>
<sequence>MNELKLSKRLQTVAEYIPNGAVMADIGSDHAYLPCYAVLNHKASGAIAGEITDGPFLSAKRQVEKSGLNSHISVRQGDGLEVIKKGEADAITIAGMGGALIAHILEAGKDKLTGKERLILQPNIHAVHIREWLYKERYALIDEVILEEDGKCYEVLVAEAGDRDAAYDGISLSAGMLVGPFLAKEKNAVFLKKWTQELQHTQSIYEQISQAADTEQNKQKLKELADRMELLKEVIDHG</sequence>
<comment type="function">
    <text evidence="2">Catalyzes the S-adenosyl-L-methionine-dependent formation of N(1)-methyladenine at position 22 (m1A22) in tRNA.</text>
</comment>
<comment type="catalytic activity">
    <reaction evidence="2">
        <text>adenosine(22) in tRNA + S-adenosyl-L-methionine = N(1)-methyladenosine(22) in tRNA + S-adenosyl-L-homocysteine + H(+)</text>
        <dbReference type="Rhea" id="RHEA:43144"/>
        <dbReference type="Rhea" id="RHEA-COMP:10361"/>
        <dbReference type="Rhea" id="RHEA-COMP:10362"/>
        <dbReference type="ChEBI" id="CHEBI:15378"/>
        <dbReference type="ChEBI" id="CHEBI:57856"/>
        <dbReference type="ChEBI" id="CHEBI:59789"/>
        <dbReference type="ChEBI" id="CHEBI:74411"/>
        <dbReference type="ChEBI" id="CHEBI:74491"/>
        <dbReference type="EC" id="2.1.1.217"/>
    </reaction>
</comment>
<comment type="subcellular location">
    <subcellularLocation>
        <location evidence="3">Cytoplasm</location>
    </subcellularLocation>
</comment>
<comment type="similarity">
    <text evidence="3">Belongs to the TrmK family.</text>
</comment>
<comment type="sequence caution" evidence="3">
    <conflict type="erroneous initiation">
        <sequence resource="EMBL-CDS" id="BAA12491"/>
    </conflict>
    <text>Truncated N-terminus.</text>
</comment>
<comment type="sequence caution" evidence="3">
    <conflict type="erroneous initiation">
        <sequence resource="EMBL-CDS" id="CAB14448"/>
    </conflict>
    <text>Truncated N-terminus.</text>
</comment>
<keyword id="KW-0002">3D-structure</keyword>
<keyword id="KW-0963">Cytoplasm</keyword>
<keyword id="KW-0489">Methyltransferase</keyword>
<keyword id="KW-0597">Phosphoprotein</keyword>
<keyword id="KW-1185">Reference proteome</keyword>
<keyword id="KW-0949">S-adenosyl-L-methionine</keyword>
<keyword id="KW-0808">Transferase</keyword>
<keyword id="KW-0819">tRNA processing</keyword>
<accession>P54471</accession>
<dbReference type="EC" id="2.1.1.217"/>
<dbReference type="EMBL" id="D84432">
    <property type="protein sequence ID" value="BAA12491.1"/>
    <property type="status" value="ALT_INIT"/>
    <property type="molecule type" value="Genomic_DNA"/>
</dbReference>
<dbReference type="EMBL" id="AL009126">
    <property type="protein sequence ID" value="CAB14448.1"/>
    <property type="status" value="ALT_INIT"/>
    <property type="molecule type" value="Genomic_DNA"/>
</dbReference>
<dbReference type="PIR" id="H69953">
    <property type="entry name" value="H69953"/>
</dbReference>
<dbReference type="RefSeq" id="NP_390397.1">
    <property type="nucleotide sequence ID" value="NC_000964.3"/>
</dbReference>
<dbReference type="RefSeq" id="WP_003246178.1">
    <property type="nucleotide sequence ID" value="NZ_OZ025638.1"/>
</dbReference>
<dbReference type="PDB" id="6Q56">
    <property type="method" value="X-ray"/>
    <property type="resolution" value="2.00 A"/>
    <property type="chains" value="A/B/C/D=1-238"/>
</dbReference>
<dbReference type="PDBsum" id="6Q56"/>
<dbReference type="SMR" id="P54471"/>
<dbReference type="FunCoup" id="P54471">
    <property type="interactions" value="10"/>
</dbReference>
<dbReference type="STRING" id="224308.BSU25180"/>
<dbReference type="iPTMnet" id="P54471"/>
<dbReference type="jPOST" id="P54471"/>
<dbReference type="PaxDb" id="224308-BSU25180"/>
<dbReference type="DNASU" id="937898"/>
<dbReference type="EnsemblBacteria" id="CAB14448">
    <property type="protein sequence ID" value="CAB14448"/>
    <property type="gene ID" value="BSU_25180"/>
</dbReference>
<dbReference type="GeneID" id="937898"/>
<dbReference type="KEGG" id="bsu:BSU25180"/>
<dbReference type="PATRIC" id="fig|224308.43.peg.2625"/>
<dbReference type="eggNOG" id="COG2384">
    <property type="taxonomic scope" value="Bacteria"/>
</dbReference>
<dbReference type="InParanoid" id="P54471"/>
<dbReference type="OrthoDB" id="5881184at2"/>
<dbReference type="BioCyc" id="BSUB:BSU25180-MONOMER"/>
<dbReference type="BioCyc" id="MetaCyc:BSU25180-MONOMER"/>
<dbReference type="BRENDA" id="2.1.1.217">
    <property type="organism ID" value="658"/>
</dbReference>
<dbReference type="Proteomes" id="UP000001570">
    <property type="component" value="Chromosome"/>
</dbReference>
<dbReference type="GO" id="GO:0005737">
    <property type="term" value="C:cytoplasm"/>
    <property type="evidence" value="ECO:0007669"/>
    <property type="project" value="UniProtKB-SubCell"/>
</dbReference>
<dbReference type="GO" id="GO:0160105">
    <property type="term" value="F:tRNA (adenine(22)-N1)-methyltransferase activity"/>
    <property type="evidence" value="ECO:0000314"/>
    <property type="project" value="UniProtKB"/>
</dbReference>
<dbReference type="GO" id="GO:0032259">
    <property type="term" value="P:methylation"/>
    <property type="evidence" value="ECO:0007669"/>
    <property type="project" value="UniProtKB-KW"/>
</dbReference>
<dbReference type="GO" id="GO:0008033">
    <property type="term" value="P:tRNA processing"/>
    <property type="evidence" value="ECO:0000314"/>
    <property type="project" value="UniProtKB"/>
</dbReference>
<dbReference type="FunFam" id="3.40.50.150:FF:000136">
    <property type="entry name" value="tRNA (Adenine(22)-N(1))-methyltransferase TrmK"/>
    <property type="match status" value="1"/>
</dbReference>
<dbReference type="Gene3D" id="1.10.287.1890">
    <property type="match status" value="1"/>
</dbReference>
<dbReference type="Gene3D" id="3.40.50.150">
    <property type="entry name" value="Vaccinia Virus protein VP39"/>
    <property type="match status" value="1"/>
</dbReference>
<dbReference type="InterPro" id="IPR029063">
    <property type="entry name" value="SAM-dependent_MTases_sf"/>
</dbReference>
<dbReference type="InterPro" id="IPR006901">
    <property type="entry name" value="TrmK"/>
</dbReference>
<dbReference type="PANTHER" id="PTHR38451">
    <property type="entry name" value="TRNA (ADENINE(22)-N(1))-METHYLTRANSFERASE"/>
    <property type="match status" value="1"/>
</dbReference>
<dbReference type="PANTHER" id="PTHR38451:SF1">
    <property type="entry name" value="TRNA (ADENINE(22)-N(1))-METHYLTRANSFERASE"/>
    <property type="match status" value="1"/>
</dbReference>
<dbReference type="Pfam" id="PF04816">
    <property type="entry name" value="TrmK"/>
    <property type="match status" value="1"/>
</dbReference>
<dbReference type="PIRSF" id="PIRSF018637">
    <property type="entry name" value="TrmK"/>
    <property type="match status" value="1"/>
</dbReference>
<dbReference type="SUPFAM" id="SSF53335">
    <property type="entry name" value="S-adenosyl-L-methionine-dependent methyltransferases"/>
    <property type="match status" value="1"/>
</dbReference>